<protein>
    <recommendedName>
        <fullName evidence="4">Polyprenyl transferase andD</fullName>
        <ecNumber evidence="3">2.5.1.-</ecNumber>
    </recommendedName>
    <alternativeName>
        <fullName evidence="4">Anditomin synthesis protein D</fullName>
    </alternativeName>
</protein>
<gene>
    <name evidence="4" type="primary">andD</name>
</gene>
<dbReference type="EC" id="2.5.1.-" evidence="3"/>
<dbReference type="EMBL" id="AB981314">
    <property type="protein sequence ID" value="BAP81858.1"/>
    <property type="molecule type" value="Genomic_DNA"/>
</dbReference>
<dbReference type="SMR" id="A0A097ZPE3"/>
<dbReference type="BioCyc" id="MetaCyc:MONOMER-19043"/>
<dbReference type="UniPathway" id="UPA00213"/>
<dbReference type="GO" id="GO:0005743">
    <property type="term" value="C:mitochondrial inner membrane"/>
    <property type="evidence" value="ECO:0007669"/>
    <property type="project" value="TreeGrafter"/>
</dbReference>
<dbReference type="GO" id="GO:0008412">
    <property type="term" value="F:4-hydroxybenzoate polyprenyltransferase activity"/>
    <property type="evidence" value="ECO:0007669"/>
    <property type="project" value="TreeGrafter"/>
</dbReference>
<dbReference type="GO" id="GO:0016114">
    <property type="term" value="P:terpenoid biosynthetic process"/>
    <property type="evidence" value="ECO:0007669"/>
    <property type="project" value="UniProtKB-UniPathway"/>
</dbReference>
<dbReference type="GO" id="GO:0006744">
    <property type="term" value="P:ubiquinone biosynthetic process"/>
    <property type="evidence" value="ECO:0007669"/>
    <property type="project" value="TreeGrafter"/>
</dbReference>
<dbReference type="CDD" id="cd13959">
    <property type="entry name" value="PT_UbiA_COQ2"/>
    <property type="match status" value="1"/>
</dbReference>
<dbReference type="FunFam" id="1.10.357.140:FF:000008">
    <property type="entry name" value="4-hydroxybenzoate octaprenyltransferase"/>
    <property type="match status" value="1"/>
</dbReference>
<dbReference type="Gene3D" id="1.10.357.140">
    <property type="entry name" value="UbiA prenyltransferase"/>
    <property type="match status" value="1"/>
</dbReference>
<dbReference type="Gene3D" id="1.20.120.1780">
    <property type="entry name" value="UbiA prenyltransferase"/>
    <property type="match status" value="1"/>
</dbReference>
<dbReference type="InterPro" id="IPR039653">
    <property type="entry name" value="Prenyltransferase"/>
</dbReference>
<dbReference type="InterPro" id="IPR000537">
    <property type="entry name" value="UbiA_prenyltransferase"/>
</dbReference>
<dbReference type="InterPro" id="IPR044878">
    <property type="entry name" value="UbiA_sf"/>
</dbReference>
<dbReference type="PANTHER" id="PTHR11048:SF39">
    <property type="entry name" value="POLYPRENYL TRANSFERASE AUSN"/>
    <property type="match status" value="1"/>
</dbReference>
<dbReference type="PANTHER" id="PTHR11048">
    <property type="entry name" value="PRENYLTRANSFERASES"/>
    <property type="match status" value="1"/>
</dbReference>
<dbReference type="Pfam" id="PF01040">
    <property type="entry name" value="UbiA"/>
    <property type="match status" value="1"/>
</dbReference>
<name>ANDD_EMEVA</name>
<feature type="chain" id="PRO_0000436580" description="Polyprenyl transferase andD">
    <location>
        <begin position="1"/>
        <end position="327"/>
    </location>
</feature>
<feature type="transmembrane region" description="Helical" evidence="2">
    <location>
        <begin position="49"/>
        <end position="69"/>
    </location>
</feature>
<feature type="transmembrane region" description="Helical" evidence="2">
    <location>
        <begin position="81"/>
        <end position="101"/>
    </location>
</feature>
<feature type="transmembrane region" description="Helical" evidence="2">
    <location>
        <begin position="140"/>
        <end position="160"/>
    </location>
</feature>
<feature type="transmembrane region" description="Helical" evidence="2">
    <location>
        <begin position="174"/>
        <end position="194"/>
    </location>
</feature>
<feature type="transmembrane region" description="Helical" evidence="2">
    <location>
        <begin position="201"/>
        <end position="221"/>
    </location>
</feature>
<feature type="transmembrane region" description="Helical" evidence="2">
    <location>
        <begin position="244"/>
        <end position="264"/>
    </location>
</feature>
<feature type="transmembrane region" description="Helical" evidence="2">
    <location>
        <begin position="271"/>
        <end position="291"/>
    </location>
</feature>
<feature type="transmembrane region" description="Helical" evidence="2">
    <location>
        <begin position="307"/>
        <end position="327"/>
    </location>
</feature>
<organism>
    <name type="scientific">Emericella variicolor</name>
    <name type="common">Aspergillus stellatus</name>
    <dbReference type="NCBI Taxonomy" id="1549217"/>
    <lineage>
        <taxon>Eukaryota</taxon>
        <taxon>Fungi</taxon>
        <taxon>Dikarya</taxon>
        <taxon>Ascomycota</taxon>
        <taxon>Pezizomycotina</taxon>
        <taxon>Eurotiomycetes</taxon>
        <taxon>Eurotiomycetidae</taxon>
        <taxon>Eurotiales</taxon>
        <taxon>Aspergillaceae</taxon>
        <taxon>Aspergillus</taxon>
        <taxon>Aspergillus subgen. Nidulantes</taxon>
    </lineage>
</organism>
<accession>A0A097ZPE3</accession>
<comment type="function">
    <text evidence="3">Polyprenyl transferase; part of the gene cluster that mediates the biosynthesis of anditomin, a fungal meroterpenoid (PubMed:25216349). The first step of the pathway is the synthesis of 3,5-dimethylorsellinic acid (DMOA) by the polyketide synthase andM (PubMed:25216349). DMOA is then converted to the phthalide compound 5,7-dihydroxy-4,6-dimethylphthalide (DHDMP) by the cytochrome P450 monooxygenase andK, which is further prenylated by the prenyltransferase andD to yield farnesyl-DHDMP (PubMed:25216349). Further epoxidation by the FAD-dependent monooxygenase andE leads to epoxyfarnesyl-DHDMP (PubMed:25216349). The next step involves the terpene cyclase andB that converts epoxyfarnesyl-DHDMP into preandiloid A through opening of the epoxide ring followed by the cyclization of the farnesyl moiety (PubMed:25216349). Preandiloid A is in turn oxidized at the C-3 hydroxyl group to yield preandiloid B by the dehydrogenase andC (PubMed:25216349). The dioxygenase andA is solely responsible for the dehydrogenation of preandiloid B leading to the enone preandiloid C, as well as for the intriguing structural rearrangement to generate the bicyclo[2.2.2]octane core, transforming preandiloid C into andiconin (PubMed:25216349). FAD-binding monooxygenase andJ then produces andilesin D which is reduced by dehydrogenase andI to yield andilesin A (PubMed:25216349). Action of acetyltransferase andG followed by a spontaneous acetate elimination leads then to andilesin B, which is in turn substrate of the short chain dehydrogenase andH to yield andilesin C (PubMed:25216349). Finally, the dioxygenase andF catalyzes the transformation of andilesin C to anditomin (PubMed:25216349).</text>
</comment>
<comment type="cofactor">
    <cofactor evidence="1">
        <name>Mg(2+)</name>
        <dbReference type="ChEBI" id="CHEBI:18420"/>
    </cofactor>
</comment>
<comment type="pathway">
    <text evidence="3">Secondary metabolite biosynthesis; terpenoid biosynthesis.</text>
</comment>
<comment type="subcellular location">
    <subcellularLocation>
        <location evidence="2">Membrane</location>
        <topology evidence="2">Multi-pass membrane protein</topology>
    </subcellularLocation>
</comment>
<comment type="similarity">
    <text evidence="5">Belongs to the UbiA prenyltransferase family.</text>
</comment>
<sequence length="327" mass="36017">MSATTTEAKQTFLCKERLPRRYHPPSKVLSRLPTSFLPYGELLRLHKPLGYILVCYPFLVAGAFSASIAPEVLEADFWPRITLLCLWSIFLRSGGCIWDDIADQHVDAKVARTRLRPLPRGAVSNSQATIFAAGTFLCGFAFVAELPGVCMVDALIMLFFAVLYPYGKRHSNYPQLILGTIGWAIPMTMHGLNLRPLDHPIPMAAMFAFIALVTIMNDIIYARQDIEEDIKAGVGSMAVRFQHCLDALTFALVFASSAALVIAGKLGNMGAPFFTISVGGHFGFFLFLAMANQRDPKSGVEWAAKRCCTSATFLLIVGMVVDLVWRS</sequence>
<evidence type="ECO:0000250" key="1">
    <source>
        <dbReference type="UniProtKB" id="P32378"/>
    </source>
</evidence>
<evidence type="ECO:0000255" key="2"/>
<evidence type="ECO:0000269" key="3">
    <source>
    </source>
</evidence>
<evidence type="ECO:0000303" key="4">
    <source>
    </source>
</evidence>
<evidence type="ECO:0000305" key="5"/>
<reference key="1">
    <citation type="journal article" date="2014" name="J. Am. Chem. Soc.">
        <title>Complete biosynthetic pathway of anditomin: nature's sophisticated synthetic route to a complex fungal meroterpenoid.</title>
        <authorList>
            <person name="Matsuda Y."/>
            <person name="Wakimoto T."/>
            <person name="Mori T."/>
            <person name="Awakawa T."/>
            <person name="Abe I."/>
        </authorList>
    </citation>
    <scope>NUCLEOTIDE SEQUENCE [GENOMIC DNA]</scope>
    <scope>FUNCTION</scope>
    <scope>CATALYTIC ACTIVITY</scope>
    <source>
        <strain>ATCC 12069 / CBS 136.55 / IMI 60316 / NBRC 32302</strain>
    </source>
</reference>
<keyword id="KW-0460">Magnesium</keyword>
<keyword id="KW-0472">Membrane</keyword>
<keyword id="KW-0808">Transferase</keyword>
<keyword id="KW-0812">Transmembrane</keyword>
<keyword id="KW-1133">Transmembrane helix</keyword>
<proteinExistence type="evidence at protein level"/>